<comment type="function">
    <text evidence="1">Catalyzes a mechanistically unusual reaction, the ATP-dependent insertion of CO2 between the N7 and N8 nitrogen atoms of 7,8-diaminopelargonic acid (DAPA, also called 7,8-diammoniononanoate) to form a ureido ring.</text>
</comment>
<comment type="catalytic activity">
    <reaction evidence="1">
        <text>(7R,8S)-7,8-diammoniononanoate + CO2 + ATP = (4R,5S)-dethiobiotin + ADP + phosphate + 3 H(+)</text>
        <dbReference type="Rhea" id="RHEA:15805"/>
        <dbReference type="ChEBI" id="CHEBI:15378"/>
        <dbReference type="ChEBI" id="CHEBI:16526"/>
        <dbReference type="ChEBI" id="CHEBI:30616"/>
        <dbReference type="ChEBI" id="CHEBI:43474"/>
        <dbReference type="ChEBI" id="CHEBI:149469"/>
        <dbReference type="ChEBI" id="CHEBI:149473"/>
        <dbReference type="ChEBI" id="CHEBI:456216"/>
        <dbReference type="EC" id="6.3.3.3"/>
    </reaction>
</comment>
<comment type="cofactor">
    <cofactor evidence="1">
        <name>Mg(2+)</name>
        <dbReference type="ChEBI" id="CHEBI:18420"/>
    </cofactor>
</comment>
<comment type="pathway">
    <text evidence="1">Cofactor biosynthesis; biotin biosynthesis; biotin from 7,8-diaminononanoate: step 1/2.</text>
</comment>
<comment type="subunit">
    <text evidence="1">Homodimer.</text>
</comment>
<comment type="subcellular location">
    <subcellularLocation>
        <location evidence="1">Cytoplasm</location>
    </subcellularLocation>
</comment>
<comment type="similarity">
    <text evidence="1">Belongs to the dethiobiotin synthetase family.</text>
</comment>
<gene>
    <name evidence="1" type="primary">bioD</name>
    <name type="ordered locus">HPSH_00145</name>
</gene>
<keyword id="KW-0067">ATP-binding</keyword>
<keyword id="KW-0093">Biotin biosynthesis</keyword>
<keyword id="KW-0963">Cytoplasm</keyword>
<keyword id="KW-0436">Ligase</keyword>
<keyword id="KW-0460">Magnesium</keyword>
<keyword id="KW-0479">Metal-binding</keyword>
<keyword id="KW-0547">Nucleotide-binding</keyword>
<organism>
    <name type="scientific">Helicobacter pylori (strain Shi470)</name>
    <dbReference type="NCBI Taxonomy" id="512562"/>
    <lineage>
        <taxon>Bacteria</taxon>
        <taxon>Pseudomonadati</taxon>
        <taxon>Campylobacterota</taxon>
        <taxon>Epsilonproteobacteria</taxon>
        <taxon>Campylobacterales</taxon>
        <taxon>Helicobacteraceae</taxon>
        <taxon>Helicobacter</taxon>
    </lineage>
</organism>
<accession>B2UW31</accession>
<evidence type="ECO:0000255" key="1">
    <source>
        <dbReference type="HAMAP-Rule" id="MF_00336"/>
    </source>
</evidence>
<dbReference type="EC" id="6.3.3.3" evidence="1"/>
<dbReference type="EMBL" id="CP001072">
    <property type="protein sequence ID" value="ACD47496.1"/>
    <property type="molecule type" value="Genomic_DNA"/>
</dbReference>
<dbReference type="RefSeq" id="WP_000897568.1">
    <property type="nucleotide sequence ID" value="NC_010698.2"/>
</dbReference>
<dbReference type="SMR" id="B2UW31"/>
<dbReference type="KEGG" id="hps:HPSH_00145"/>
<dbReference type="HOGENOM" id="CLU_072551_3_2_7"/>
<dbReference type="UniPathway" id="UPA00078">
    <property type="reaction ID" value="UER00161"/>
</dbReference>
<dbReference type="GO" id="GO:0005829">
    <property type="term" value="C:cytosol"/>
    <property type="evidence" value="ECO:0007669"/>
    <property type="project" value="TreeGrafter"/>
</dbReference>
<dbReference type="GO" id="GO:0005524">
    <property type="term" value="F:ATP binding"/>
    <property type="evidence" value="ECO:0007669"/>
    <property type="project" value="UniProtKB-UniRule"/>
</dbReference>
<dbReference type="GO" id="GO:0004141">
    <property type="term" value="F:dethiobiotin synthase activity"/>
    <property type="evidence" value="ECO:0007669"/>
    <property type="project" value="UniProtKB-UniRule"/>
</dbReference>
<dbReference type="GO" id="GO:0000287">
    <property type="term" value="F:magnesium ion binding"/>
    <property type="evidence" value="ECO:0007669"/>
    <property type="project" value="UniProtKB-UniRule"/>
</dbReference>
<dbReference type="GO" id="GO:0009102">
    <property type="term" value="P:biotin biosynthetic process"/>
    <property type="evidence" value="ECO:0007669"/>
    <property type="project" value="UniProtKB-UniRule"/>
</dbReference>
<dbReference type="CDD" id="cd03109">
    <property type="entry name" value="DTBS"/>
    <property type="match status" value="1"/>
</dbReference>
<dbReference type="Gene3D" id="3.40.50.300">
    <property type="entry name" value="P-loop containing nucleotide triphosphate hydrolases"/>
    <property type="match status" value="1"/>
</dbReference>
<dbReference type="HAMAP" id="MF_00336">
    <property type="entry name" value="BioD"/>
    <property type="match status" value="1"/>
</dbReference>
<dbReference type="InterPro" id="IPR004472">
    <property type="entry name" value="DTB_synth_BioD"/>
</dbReference>
<dbReference type="InterPro" id="IPR027417">
    <property type="entry name" value="P-loop_NTPase"/>
</dbReference>
<dbReference type="NCBIfam" id="TIGR00347">
    <property type="entry name" value="bioD"/>
    <property type="match status" value="1"/>
</dbReference>
<dbReference type="PANTHER" id="PTHR43210:SF2">
    <property type="entry name" value="ATP-DEPENDENT DETHIOBIOTIN SYNTHETASE BIOD 2"/>
    <property type="match status" value="1"/>
</dbReference>
<dbReference type="PANTHER" id="PTHR43210">
    <property type="entry name" value="DETHIOBIOTIN SYNTHETASE"/>
    <property type="match status" value="1"/>
</dbReference>
<dbReference type="Pfam" id="PF13500">
    <property type="entry name" value="AAA_26"/>
    <property type="match status" value="1"/>
</dbReference>
<dbReference type="SUPFAM" id="SSF52540">
    <property type="entry name" value="P-loop containing nucleoside triphosphate hydrolases"/>
    <property type="match status" value="1"/>
</dbReference>
<proteinExistence type="inferred from homology"/>
<name>BIOD_HELPS</name>
<sequence>MLFISATNTNAGKTTCARLLAQYCNACGVRTILLKPIETGVNDTTNHFSDVHLFLQDNRLLDRSLTLKDISFYRYAKASAPLIAQQEENQNAPIDTNDLIQRLQNFTKTYDLVIVEGAGGLCVPITLEENMLDLALKLKAKILVISHDNLGLINDCLLNDFLLKSHQLDYKIAINLRENNAAFHSVSLPYIELFNERSNNPIVIFQQSLKELMSFALK</sequence>
<protein>
    <recommendedName>
        <fullName evidence="1">ATP-dependent dethiobiotin synthetase BioD</fullName>
        <ecNumber evidence="1">6.3.3.3</ecNumber>
    </recommendedName>
    <alternativeName>
        <fullName evidence="1">DTB synthetase</fullName>
        <shortName evidence="1">DTBS</shortName>
    </alternativeName>
    <alternativeName>
        <fullName evidence="1">Dethiobiotin synthase</fullName>
    </alternativeName>
</protein>
<feature type="chain" id="PRO_1000119873" description="ATP-dependent dethiobiotin synthetase BioD">
    <location>
        <begin position="1"/>
        <end position="218"/>
    </location>
</feature>
<feature type="active site" evidence="1">
    <location>
        <position position="35"/>
    </location>
</feature>
<feature type="binding site" evidence="1">
    <location>
        <begin position="10"/>
        <end position="15"/>
    </location>
    <ligand>
        <name>ATP</name>
        <dbReference type="ChEBI" id="CHEBI:30616"/>
    </ligand>
</feature>
<feature type="binding site" evidence="1">
    <location>
        <position position="14"/>
    </location>
    <ligand>
        <name>Mg(2+)</name>
        <dbReference type="ChEBI" id="CHEBI:18420"/>
    </ligand>
</feature>
<feature type="binding site" evidence="1">
    <location>
        <position position="39"/>
    </location>
    <ligand>
        <name>substrate</name>
    </ligand>
</feature>
<feature type="binding site" evidence="1">
    <location>
        <position position="52"/>
    </location>
    <ligand>
        <name>Mg(2+)</name>
        <dbReference type="ChEBI" id="CHEBI:18420"/>
    </ligand>
</feature>
<feature type="binding site" evidence="1">
    <location>
        <begin position="116"/>
        <end position="119"/>
    </location>
    <ligand>
        <name>ATP</name>
        <dbReference type="ChEBI" id="CHEBI:30616"/>
    </ligand>
</feature>
<feature type="binding site" evidence="1">
    <location>
        <position position="116"/>
    </location>
    <ligand>
        <name>Mg(2+)</name>
        <dbReference type="ChEBI" id="CHEBI:18420"/>
    </ligand>
</feature>
<feature type="binding site" evidence="1">
    <location>
        <begin position="176"/>
        <end position="177"/>
    </location>
    <ligand>
        <name>ATP</name>
        <dbReference type="ChEBI" id="CHEBI:30616"/>
    </ligand>
</feature>
<reference key="1">
    <citation type="submission" date="2008-05" db="EMBL/GenBank/DDBJ databases">
        <title>Genome sequence of Helicobacter pylori from the remote Amazon: traces of Asian ancestry of the first Americans.</title>
        <authorList>
            <person name="Kersulyte D."/>
            <person name="Kalia A."/>
            <person name="Gilman R.H."/>
            <person name="Berg D.E."/>
        </authorList>
    </citation>
    <scope>NUCLEOTIDE SEQUENCE [LARGE SCALE GENOMIC DNA]</scope>
    <source>
        <strain>Shi470</strain>
    </source>
</reference>